<organism>
    <name type="scientific">Carboxydothermus hydrogenoformans (strain ATCC BAA-161 / DSM 6008 / Z-2901)</name>
    <dbReference type="NCBI Taxonomy" id="246194"/>
    <lineage>
        <taxon>Bacteria</taxon>
        <taxon>Bacillati</taxon>
        <taxon>Bacillota</taxon>
        <taxon>Clostridia</taxon>
        <taxon>Thermoanaerobacterales</taxon>
        <taxon>Thermoanaerobacteraceae</taxon>
        <taxon>Carboxydothermus</taxon>
    </lineage>
</organism>
<evidence type="ECO:0000255" key="1">
    <source>
        <dbReference type="HAMAP-Rule" id="MF_01033"/>
    </source>
</evidence>
<accession>Q3AEQ2</accession>
<sequence>MSGRSCKGPFKILVLPGDGIGPEIIKEAVKVLKALGEKKGITFNFQYGLIGGAAIDERGVPLPEETVELGKQCDAILLGAVGGPKWDNLPPEIRPELGGLLKIRKVFDLYANLRPVMFFPELKNASPLKPDIIEGVDILMVRELTGGLYFGEKKRFTTEQGEQAVIDTLIYTEKEVERVVRLGFELAQKRRGKLTLVDKANVLESSRFWREITGEIKKEYPDVELSYMYVDNCAMQLIRNPRQFDVIVTENMFGDILTDEGSVLAGSIGLLPSASLNGKFGLYEPIHGSAPDIAGQNKANPLATILSAGMMLRYSLDCPEEALLIEKAVKAVLQKGYRTGDILEPGTTLVTCEEMGDLVAEEILGGVYDEGLPL</sequence>
<reference key="1">
    <citation type="journal article" date="2005" name="PLoS Genet.">
        <title>Life in hot carbon monoxide: the complete genome sequence of Carboxydothermus hydrogenoformans Z-2901.</title>
        <authorList>
            <person name="Wu M."/>
            <person name="Ren Q."/>
            <person name="Durkin A.S."/>
            <person name="Daugherty S.C."/>
            <person name="Brinkac L.M."/>
            <person name="Dodson R.J."/>
            <person name="Madupu R."/>
            <person name="Sullivan S.A."/>
            <person name="Kolonay J.F."/>
            <person name="Nelson W.C."/>
            <person name="Tallon L.J."/>
            <person name="Jones K.M."/>
            <person name="Ulrich L.E."/>
            <person name="Gonzalez J.M."/>
            <person name="Zhulin I.B."/>
            <person name="Robb F.T."/>
            <person name="Eisen J.A."/>
        </authorList>
    </citation>
    <scope>NUCLEOTIDE SEQUENCE [LARGE SCALE GENOMIC DNA]</scope>
    <source>
        <strain>ATCC BAA-161 / DSM 6008 / Z-2901</strain>
    </source>
</reference>
<name>LEU3_CARHZ</name>
<protein>
    <recommendedName>
        <fullName evidence="1">3-isopropylmalate dehydrogenase</fullName>
        <ecNumber evidence="1">1.1.1.85</ecNumber>
    </recommendedName>
    <alternativeName>
        <fullName evidence="1">3-IPM-DH</fullName>
    </alternativeName>
    <alternativeName>
        <fullName evidence="1">Beta-IPM dehydrogenase</fullName>
        <shortName evidence="1">IMDH</shortName>
    </alternativeName>
</protein>
<dbReference type="EC" id="1.1.1.85" evidence="1"/>
<dbReference type="EMBL" id="CP000141">
    <property type="protein sequence ID" value="ABB15752.1"/>
    <property type="molecule type" value="Genomic_DNA"/>
</dbReference>
<dbReference type="RefSeq" id="WP_011343458.1">
    <property type="nucleotide sequence ID" value="NC_007503.1"/>
</dbReference>
<dbReference type="SMR" id="Q3AEQ2"/>
<dbReference type="FunCoup" id="Q3AEQ2">
    <property type="interactions" value="345"/>
</dbReference>
<dbReference type="STRING" id="246194.CHY_0524"/>
<dbReference type="KEGG" id="chy:CHY_0524"/>
<dbReference type="eggNOG" id="COG0473">
    <property type="taxonomic scope" value="Bacteria"/>
</dbReference>
<dbReference type="HOGENOM" id="CLU_031953_0_3_9"/>
<dbReference type="InParanoid" id="Q3AEQ2"/>
<dbReference type="OrthoDB" id="9806254at2"/>
<dbReference type="UniPathway" id="UPA00048">
    <property type="reaction ID" value="UER00072"/>
</dbReference>
<dbReference type="Proteomes" id="UP000002706">
    <property type="component" value="Chromosome"/>
</dbReference>
<dbReference type="GO" id="GO:0005829">
    <property type="term" value="C:cytosol"/>
    <property type="evidence" value="ECO:0007669"/>
    <property type="project" value="TreeGrafter"/>
</dbReference>
<dbReference type="GO" id="GO:0003862">
    <property type="term" value="F:3-isopropylmalate dehydrogenase activity"/>
    <property type="evidence" value="ECO:0007669"/>
    <property type="project" value="UniProtKB-UniRule"/>
</dbReference>
<dbReference type="GO" id="GO:0000287">
    <property type="term" value="F:magnesium ion binding"/>
    <property type="evidence" value="ECO:0007669"/>
    <property type="project" value="InterPro"/>
</dbReference>
<dbReference type="GO" id="GO:0051287">
    <property type="term" value="F:NAD binding"/>
    <property type="evidence" value="ECO:0007669"/>
    <property type="project" value="InterPro"/>
</dbReference>
<dbReference type="GO" id="GO:0009098">
    <property type="term" value="P:L-leucine biosynthetic process"/>
    <property type="evidence" value="ECO:0007669"/>
    <property type="project" value="UniProtKB-UniRule"/>
</dbReference>
<dbReference type="FunFam" id="3.40.718.10:FF:000028">
    <property type="entry name" value="3-isopropylmalate dehydrogenase"/>
    <property type="match status" value="1"/>
</dbReference>
<dbReference type="Gene3D" id="3.40.718.10">
    <property type="entry name" value="Isopropylmalate Dehydrogenase"/>
    <property type="match status" value="1"/>
</dbReference>
<dbReference type="HAMAP" id="MF_01033">
    <property type="entry name" value="LeuB_type1"/>
    <property type="match status" value="1"/>
</dbReference>
<dbReference type="InterPro" id="IPR019818">
    <property type="entry name" value="IsoCit/isopropylmalate_DH_CS"/>
</dbReference>
<dbReference type="InterPro" id="IPR024084">
    <property type="entry name" value="IsoPropMal-DH-like_dom"/>
</dbReference>
<dbReference type="InterPro" id="IPR004429">
    <property type="entry name" value="Isopropylmalate_DH"/>
</dbReference>
<dbReference type="NCBIfam" id="TIGR00169">
    <property type="entry name" value="leuB"/>
    <property type="match status" value="1"/>
</dbReference>
<dbReference type="PANTHER" id="PTHR42979">
    <property type="entry name" value="3-ISOPROPYLMALATE DEHYDROGENASE"/>
    <property type="match status" value="1"/>
</dbReference>
<dbReference type="PANTHER" id="PTHR42979:SF1">
    <property type="entry name" value="3-ISOPROPYLMALATE DEHYDROGENASE"/>
    <property type="match status" value="1"/>
</dbReference>
<dbReference type="Pfam" id="PF00180">
    <property type="entry name" value="Iso_dh"/>
    <property type="match status" value="1"/>
</dbReference>
<dbReference type="SMART" id="SM01329">
    <property type="entry name" value="Iso_dh"/>
    <property type="match status" value="1"/>
</dbReference>
<dbReference type="SUPFAM" id="SSF53659">
    <property type="entry name" value="Isocitrate/Isopropylmalate dehydrogenase-like"/>
    <property type="match status" value="1"/>
</dbReference>
<dbReference type="PROSITE" id="PS00470">
    <property type="entry name" value="IDH_IMDH"/>
    <property type="match status" value="1"/>
</dbReference>
<gene>
    <name evidence="1" type="primary">leuB</name>
    <name type="ordered locus">CHY_0524</name>
</gene>
<comment type="function">
    <text evidence="1">Catalyzes the oxidation of 3-carboxy-2-hydroxy-4-methylpentanoate (3-isopropylmalate) to 3-carboxy-4-methyl-2-oxopentanoate. The product decarboxylates to 4-methyl-2 oxopentanoate.</text>
</comment>
<comment type="catalytic activity">
    <reaction evidence="1">
        <text>(2R,3S)-3-isopropylmalate + NAD(+) = 4-methyl-2-oxopentanoate + CO2 + NADH</text>
        <dbReference type="Rhea" id="RHEA:32271"/>
        <dbReference type="ChEBI" id="CHEBI:16526"/>
        <dbReference type="ChEBI" id="CHEBI:17865"/>
        <dbReference type="ChEBI" id="CHEBI:35121"/>
        <dbReference type="ChEBI" id="CHEBI:57540"/>
        <dbReference type="ChEBI" id="CHEBI:57945"/>
        <dbReference type="EC" id="1.1.1.85"/>
    </reaction>
</comment>
<comment type="cofactor">
    <cofactor evidence="1">
        <name>Mg(2+)</name>
        <dbReference type="ChEBI" id="CHEBI:18420"/>
    </cofactor>
    <cofactor evidence="1">
        <name>Mn(2+)</name>
        <dbReference type="ChEBI" id="CHEBI:29035"/>
    </cofactor>
    <text evidence="1">Binds 1 Mg(2+) or Mn(2+) ion per subunit.</text>
</comment>
<comment type="pathway">
    <text evidence="1">Amino-acid biosynthesis; L-leucine biosynthesis; L-leucine from 3-methyl-2-oxobutanoate: step 3/4.</text>
</comment>
<comment type="subunit">
    <text evidence="1">Homodimer.</text>
</comment>
<comment type="subcellular location">
    <subcellularLocation>
        <location evidence="1">Cytoplasm</location>
    </subcellularLocation>
</comment>
<comment type="similarity">
    <text evidence="1">Belongs to the isocitrate and isopropylmalate dehydrogenases family. LeuB type 1 subfamily.</text>
</comment>
<proteinExistence type="inferred from homology"/>
<feature type="chain" id="PRO_0000250110" description="3-isopropylmalate dehydrogenase">
    <location>
        <begin position="1"/>
        <end position="374"/>
    </location>
</feature>
<feature type="binding site" evidence="1">
    <location>
        <begin position="83"/>
        <end position="96"/>
    </location>
    <ligand>
        <name>NAD(+)</name>
        <dbReference type="ChEBI" id="CHEBI:57540"/>
    </ligand>
</feature>
<feature type="binding site" evidence="1">
    <location>
        <position position="104"/>
    </location>
    <ligand>
        <name>substrate</name>
    </ligand>
</feature>
<feature type="binding site" evidence="1">
    <location>
        <position position="114"/>
    </location>
    <ligand>
        <name>substrate</name>
    </ligand>
</feature>
<feature type="binding site" evidence="1">
    <location>
        <position position="142"/>
    </location>
    <ligand>
        <name>substrate</name>
    </ligand>
</feature>
<feature type="binding site" evidence="1">
    <location>
        <position position="231"/>
    </location>
    <ligand>
        <name>Mg(2+)</name>
        <dbReference type="ChEBI" id="CHEBI:18420"/>
    </ligand>
</feature>
<feature type="binding site" evidence="1">
    <location>
        <position position="231"/>
    </location>
    <ligand>
        <name>substrate</name>
    </ligand>
</feature>
<feature type="binding site" evidence="1">
    <location>
        <position position="255"/>
    </location>
    <ligand>
        <name>Mg(2+)</name>
        <dbReference type="ChEBI" id="CHEBI:18420"/>
    </ligand>
</feature>
<feature type="binding site" evidence="1">
    <location>
        <position position="259"/>
    </location>
    <ligand>
        <name>Mg(2+)</name>
        <dbReference type="ChEBI" id="CHEBI:18420"/>
    </ligand>
</feature>
<feature type="binding site" evidence="1">
    <location>
        <begin position="288"/>
        <end position="300"/>
    </location>
    <ligand>
        <name>NAD(+)</name>
        <dbReference type="ChEBI" id="CHEBI:57540"/>
    </ligand>
</feature>
<feature type="site" description="Important for catalysis" evidence="1">
    <location>
        <position position="149"/>
    </location>
</feature>
<feature type="site" description="Important for catalysis" evidence="1">
    <location>
        <position position="199"/>
    </location>
</feature>
<keyword id="KW-0028">Amino-acid biosynthesis</keyword>
<keyword id="KW-0100">Branched-chain amino acid biosynthesis</keyword>
<keyword id="KW-0963">Cytoplasm</keyword>
<keyword id="KW-0432">Leucine biosynthesis</keyword>
<keyword id="KW-0460">Magnesium</keyword>
<keyword id="KW-0464">Manganese</keyword>
<keyword id="KW-0479">Metal-binding</keyword>
<keyword id="KW-0520">NAD</keyword>
<keyword id="KW-0560">Oxidoreductase</keyword>
<keyword id="KW-1185">Reference proteome</keyword>